<gene>
    <name type="ORF">CHLREDRAFT_130093</name>
</gene>
<reference key="1">
    <citation type="journal article" date="2007" name="Science">
        <title>The Chlamydomonas genome reveals the evolution of key animal and plant functions.</title>
        <authorList>
            <person name="Merchant S.S."/>
            <person name="Prochnik S.E."/>
            <person name="Vallon O."/>
            <person name="Harris E.H."/>
            <person name="Karpowicz S.J."/>
            <person name="Witman G.B."/>
            <person name="Terry A."/>
            <person name="Salamov A."/>
            <person name="Fritz-Laylin L.K."/>
            <person name="Marechal-Drouard L."/>
            <person name="Marshall W.F."/>
            <person name="Qu L.H."/>
            <person name="Nelson D.R."/>
            <person name="Sanderfoot A.A."/>
            <person name="Spalding M.H."/>
            <person name="Kapitonov V.V."/>
            <person name="Ren Q."/>
            <person name="Ferris P."/>
            <person name="Lindquist E."/>
            <person name="Shapiro H."/>
            <person name="Lucas S.M."/>
            <person name="Grimwood J."/>
            <person name="Schmutz J."/>
            <person name="Cardol P."/>
            <person name="Cerutti H."/>
            <person name="Chanfreau G."/>
            <person name="Chen C.L."/>
            <person name="Cognat V."/>
            <person name="Croft M.T."/>
            <person name="Dent R."/>
            <person name="Dutcher S."/>
            <person name="Fernandez E."/>
            <person name="Fukuzawa H."/>
            <person name="Gonzalez-Ballester D."/>
            <person name="Gonzalez-Halphen D."/>
            <person name="Hallmann A."/>
            <person name="Hanikenne M."/>
            <person name="Hippler M."/>
            <person name="Inwood W."/>
            <person name="Jabbari K."/>
            <person name="Kalanon M."/>
            <person name="Kuras R."/>
            <person name="Lefebvre P.A."/>
            <person name="Lemaire S.D."/>
            <person name="Lobanov A.V."/>
            <person name="Lohr M."/>
            <person name="Manuell A."/>
            <person name="Meier I."/>
            <person name="Mets L."/>
            <person name="Mittag M."/>
            <person name="Mittelmeier T."/>
            <person name="Moroney J.V."/>
            <person name="Moseley J."/>
            <person name="Napoli C."/>
            <person name="Nedelcu A.M."/>
            <person name="Niyogi K."/>
            <person name="Novoselov S.V."/>
            <person name="Paulsen I.T."/>
            <person name="Pazour G.J."/>
            <person name="Purton S."/>
            <person name="Ral J.P."/>
            <person name="Riano-Pachon D.M."/>
            <person name="Riekhof W."/>
            <person name="Rymarquis L."/>
            <person name="Schroda M."/>
            <person name="Stern D."/>
            <person name="Umen J."/>
            <person name="Willows R."/>
            <person name="Wilson N."/>
            <person name="Zimmer S.L."/>
            <person name="Allmer J."/>
            <person name="Balk J."/>
            <person name="Bisova K."/>
            <person name="Chen C.J."/>
            <person name="Elias M."/>
            <person name="Gendler K."/>
            <person name="Hauser C."/>
            <person name="Lamb M.R."/>
            <person name="Ledford H."/>
            <person name="Long J.C."/>
            <person name="Minagawa J."/>
            <person name="Page M.D."/>
            <person name="Pan J."/>
            <person name="Pootakham W."/>
            <person name="Roje S."/>
            <person name="Rose A."/>
            <person name="Stahlberg E."/>
            <person name="Terauchi A.M."/>
            <person name="Yang P."/>
            <person name="Ball S."/>
            <person name="Bowler C."/>
            <person name="Dieckmann C.L."/>
            <person name="Gladyshev V.N."/>
            <person name="Green P."/>
            <person name="Jorgensen R."/>
            <person name="Mayfield S."/>
            <person name="Mueller-Roeber B."/>
            <person name="Rajamani S."/>
            <person name="Sayre R.T."/>
            <person name="Brokstein P."/>
            <person name="Dubchak I."/>
            <person name="Goodstein D."/>
            <person name="Hornick L."/>
            <person name="Huang Y.W."/>
            <person name="Jhaveri J."/>
            <person name="Luo Y."/>
            <person name="Martinez D."/>
            <person name="Ngau W.C."/>
            <person name="Otillar B."/>
            <person name="Poliakov A."/>
            <person name="Porter A."/>
            <person name="Szajkowski L."/>
            <person name="Werner G."/>
            <person name="Zhou K."/>
            <person name="Grigoriev I.V."/>
            <person name="Rokhsar D.S."/>
            <person name="Grossman A.R."/>
        </authorList>
    </citation>
    <scope>NUCLEOTIDE SEQUENCE [LARGE SCALE GENOMIC DNA]</scope>
    <source>
        <strain>CC-503</strain>
        <strain>cw92</strain>
    </source>
</reference>
<accession>A8IZG4</accession>
<protein>
    <recommendedName>
        <fullName evidence="1">Probable cytosolic iron-sulfur protein assembly protein CIAO1 homolog</fullName>
    </recommendedName>
</protein>
<comment type="function">
    <text evidence="1">Essential component of the cytosolic iron-sulfur (Fe/S) protein assembly machinery. Required for the maturation of extramitochondrial Fe/S proteins.</text>
</comment>
<comment type="similarity">
    <text evidence="1">Belongs to the WD repeat CIA1 family.</text>
</comment>
<name>CIAO1_CHLRE</name>
<organism>
    <name type="scientific">Chlamydomonas reinhardtii</name>
    <name type="common">Chlamydomonas smithii</name>
    <dbReference type="NCBI Taxonomy" id="3055"/>
    <lineage>
        <taxon>Eukaryota</taxon>
        <taxon>Viridiplantae</taxon>
        <taxon>Chlorophyta</taxon>
        <taxon>core chlorophytes</taxon>
        <taxon>Chlorophyceae</taxon>
        <taxon>CS clade</taxon>
        <taxon>Chlamydomonadales</taxon>
        <taxon>Chlamydomonadaceae</taxon>
        <taxon>Chlamydomonas</taxon>
    </lineage>
</organism>
<sequence>MDPFTLEPIGALSGHDDRVWNVAWSPQGDMLASCSGDKTVRIWSRRQPRPSEQWYCSAILDQCHTRTIRSVAWSPTGRALATASFDATVAVWELSSGVWEQVAELEGHENEVKCVAWNPDGRLIATCGRDRSVWIWESMPGREFECVDVKQGHSQDVKAVTWHPSGELLVSAGYDDTIKLWTYDGDEWGCAQTLGGTGTGHESTVWDVCWDPVSRARLASCSDDLTLRLWESRAAPTSTPASAPAGAAAAGFVPSRPDLRCAVTLSGHHRRTVFSLDWAPTGLIATGDGDDSILAEEEASGLLTQPGGQWGCWARVAKAHGADVNCVRWNPAEPRLLASCSDDGLIRLWWLR</sequence>
<keyword id="KW-0677">Repeat</keyword>
<keyword id="KW-0853">WD repeat</keyword>
<proteinExistence type="inferred from homology"/>
<evidence type="ECO:0000255" key="1">
    <source>
        <dbReference type="HAMAP-Rule" id="MF_03037"/>
    </source>
</evidence>
<feature type="chain" id="PRO_0000382532" description="Probable cytosolic iron-sulfur protein assembly protein CIAO1 homolog">
    <location>
        <begin position="1"/>
        <end position="352"/>
    </location>
</feature>
<feature type="repeat" description="WD 1">
    <location>
        <begin position="14"/>
        <end position="53"/>
    </location>
</feature>
<feature type="repeat" description="WD 2">
    <location>
        <begin position="63"/>
        <end position="102"/>
    </location>
</feature>
<feature type="repeat" description="WD 3">
    <location>
        <begin position="107"/>
        <end position="146"/>
    </location>
</feature>
<feature type="repeat" description="WD 4">
    <location>
        <begin position="152"/>
        <end position="191"/>
    </location>
</feature>
<feature type="repeat" description="WD 5">
    <location>
        <begin position="200"/>
        <end position="240"/>
    </location>
</feature>
<feature type="repeat" description="WD 6">
    <location>
        <begin position="268"/>
        <end position="306"/>
    </location>
</feature>
<feature type="repeat" description="WD 7">
    <location>
        <begin position="319"/>
        <end position="352"/>
    </location>
</feature>
<dbReference type="EMBL" id="DS496128">
    <property type="protein sequence ID" value="EDP02714.1"/>
    <property type="molecule type" value="Genomic_DNA"/>
</dbReference>
<dbReference type="RefSeq" id="XP_001694281.1">
    <property type="nucleotide sequence ID" value="XM_001694229.1"/>
</dbReference>
<dbReference type="SMR" id="A8IZG4"/>
<dbReference type="PaxDb" id="3055-EDP02714"/>
<dbReference type="eggNOG" id="KOG0645">
    <property type="taxonomic scope" value="Eukaryota"/>
</dbReference>
<dbReference type="HOGENOM" id="CLU_000288_57_8_1"/>
<dbReference type="GO" id="GO:0097361">
    <property type="term" value="C:cytosolic [4Fe-4S] assembly targeting complex"/>
    <property type="evidence" value="ECO:0007669"/>
    <property type="project" value="InterPro"/>
</dbReference>
<dbReference type="GO" id="GO:0016226">
    <property type="term" value="P:iron-sulfur cluster assembly"/>
    <property type="evidence" value="ECO:0007669"/>
    <property type="project" value="UniProtKB-UniRule"/>
</dbReference>
<dbReference type="CDD" id="cd00200">
    <property type="entry name" value="WD40"/>
    <property type="match status" value="1"/>
</dbReference>
<dbReference type="FunFam" id="2.130.10.10:FF:001786">
    <property type="entry name" value="Probable cytosolic iron-sulfur protein assembly protein Ciao1"/>
    <property type="match status" value="1"/>
</dbReference>
<dbReference type="FunFam" id="2.130.10.10:FF:002017">
    <property type="entry name" value="Probable cytosolic iron-sulfur protein assembly protein CIAO1 homolog"/>
    <property type="match status" value="1"/>
</dbReference>
<dbReference type="Gene3D" id="2.130.10.10">
    <property type="entry name" value="YVTN repeat-like/Quinoprotein amine dehydrogenase"/>
    <property type="match status" value="2"/>
</dbReference>
<dbReference type="HAMAP" id="MF_03037">
    <property type="entry name" value="ciao1"/>
    <property type="match status" value="1"/>
</dbReference>
<dbReference type="InterPro" id="IPR028608">
    <property type="entry name" value="CIAO1/Cia1"/>
</dbReference>
<dbReference type="InterPro" id="IPR020472">
    <property type="entry name" value="G-protein_beta_WD-40_rep"/>
</dbReference>
<dbReference type="InterPro" id="IPR015943">
    <property type="entry name" value="WD40/YVTN_repeat-like_dom_sf"/>
</dbReference>
<dbReference type="InterPro" id="IPR019775">
    <property type="entry name" value="WD40_repeat_CS"/>
</dbReference>
<dbReference type="InterPro" id="IPR036322">
    <property type="entry name" value="WD40_repeat_dom_sf"/>
</dbReference>
<dbReference type="InterPro" id="IPR001680">
    <property type="entry name" value="WD40_rpt"/>
</dbReference>
<dbReference type="PANTHER" id="PTHR19920:SF0">
    <property type="entry name" value="CYTOSOLIC IRON-SULFUR PROTEIN ASSEMBLY PROTEIN CIAO1-RELATED"/>
    <property type="match status" value="1"/>
</dbReference>
<dbReference type="PANTHER" id="PTHR19920">
    <property type="entry name" value="WD40 PROTEIN CIAO1"/>
    <property type="match status" value="1"/>
</dbReference>
<dbReference type="Pfam" id="PF00400">
    <property type="entry name" value="WD40"/>
    <property type="match status" value="7"/>
</dbReference>
<dbReference type="PRINTS" id="PR00320">
    <property type="entry name" value="GPROTEINBRPT"/>
</dbReference>
<dbReference type="SMART" id="SM00320">
    <property type="entry name" value="WD40"/>
    <property type="match status" value="7"/>
</dbReference>
<dbReference type="SUPFAM" id="SSF50978">
    <property type="entry name" value="WD40 repeat-like"/>
    <property type="match status" value="1"/>
</dbReference>
<dbReference type="PROSITE" id="PS00678">
    <property type="entry name" value="WD_REPEATS_1"/>
    <property type="match status" value="3"/>
</dbReference>
<dbReference type="PROSITE" id="PS50082">
    <property type="entry name" value="WD_REPEATS_2"/>
    <property type="match status" value="6"/>
</dbReference>
<dbReference type="PROSITE" id="PS50294">
    <property type="entry name" value="WD_REPEATS_REGION"/>
    <property type="match status" value="1"/>
</dbReference>